<name>RL23_ACIBY</name>
<comment type="function">
    <text evidence="1">One of the early assembly proteins it binds 23S rRNA. One of the proteins that surrounds the polypeptide exit tunnel on the outside of the ribosome. Forms the main docking site for trigger factor binding to the ribosome.</text>
</comment>
<comment type="subunit">
    <text evidence="1">Part of the 50S ribosomal subunit. Contacts protein L29, and trigger factor when it is bound to the ribosome.</text>
</comment>
<comment type="similarity">
    <text evidence="1">Belongs to the universal ribosomal protein uL23 family.</text>
</comment>
<proteinExistence type="inferred from homology"/>
<dbReference type="EMBL" id="CU459141">
    <property type="protein sequence ID" value="CAM85384.1"/>
    <property type="molecule type" value="Genomic_DNA"/>
</dbReference>
<dbReference type="RefSeq" id="WP_001058538.1">
    <property type="nucleotide sequence ID" value="NZ_JBDGFB010000011.1"/>
</dbReference>
<dbReference type="SMR" id="B0V6X0"/>
<dbReference type="EnsemblBacteria" id="CAM85384">
    <property type="protein sequence ID" value="CAM85384"/>
    <property type="gene ID" value="ABAYE0410"/>
</dbReference>
<dbReference type="GeneID" id="92895315"/>
<dbReference type="KEGG" id="aby:ABAYE0410"/>
<dbReference type="HOGENOM" id="CLU_037562_3_1_6"/>
<dbReference type="GO" id="GO:1990904">
    <property type="term" value="C:ribonucleoprotein complex"/>
    <property type="evidence" value="ECO:0007669"/>
    <property type="project" value="UniProtKB-KW"/>
</dbReference>
<dbReference type="GO" id="GO:0005840">
    <property type="term" value="C:ribosome"/>
    <property type="evidence" value="ECO:0007669"/>
    <property type="project" value="UniProtKB-KW"/>
</dbReference>
<dbReference type="GO" id="GO:0019843">
    <property type="term" value="F:rRNA binding"/>
    <property type="evidence" value="ECO:0007669"/>
    <property type="project" value="UniProtKB-UniRule"/>
</dbReference>
<dbReference type="GO" id="GO:0003735">
    <property type="term" value="F:structural constituent of ribosome"/>
    <property type="evidence" value="ECO:0007669"/>
    <property type="project" value="InterPro"/>
</dbReference>
<dbReference type="GO" id="GO:0006412">
    <property type="term" value="P:translation"/>
    <property type="evidence" value="ECO:0007669"/>
    <property type="project" value="UniProtKB-UniRule"/>
</dbReference>
<dbReference type="FunFam" id="3.30.70.330:FF:000001">
    <property type="entry name" value="50S ribosomal protein L23"/>
    <property type="match status" value="1"/>
</dbReference>
<dbReference type="Gene3D" id="3.30.70.330">
    <property type="match status" value="1"/>
</dbReference>
<dbReference type="HAMAP" id="MF_01369_B">
    <property type="entry name" value="Ribosomal_uL23_B"/>
    <property type="match status" value="1"/>
</dbReference>
<dbReference type="InterPro" id="IPR012677">
    <property type="entry name" value="Nucleotide-bd_a/b_plait_sf"/>
</dbReference>
<dbReference type="InterPro" id="IPR013025">
    <property type="entry name" value="Ribosomal_uL23-like"/>
</dbReference>
<dbReference type="InterPro" id="IPR012678">
    <property type="entry name" value="Ribosomal_uL23/eL15/eS24_sf"/>
</dbReference>
<dbReference type="NCBIfam" id="NF004359">
    <property type="entry name" value="PRK05738.1-3"/>
    <property type="match status" value="1"/>
</dbReference>
<dbReference type="NCBIfam" id="NF004363">
    <property type="entry name" value="PRK05738.2-4"/>
    <property type="match status" value="1"/>
</dbReference>
<dbReference type="PANTHER" id="PTHR11620">
    <property type="entry name" value="60S RIBOSOMAL PROTEIN L23A"/>
    <property type="match status" value="1"/>
</dbReference>
<dbReference type="Pfam" id="PF00276">
    <property type="entry name" value="Ribosomal_L23"/>
    <property type="match status" value="1"/>
</dbReference>
<dbReference type="SUPFAM" id="SSF54189">
    <property type="entry name" value="Ribosomal proteins S24e, L23 and L15e"/>
    <property type="match status" value="1"/>
</dbReference>
<organism>
    <name type="scientific">Acinetobacter baumannii (strain AYE)</name>
    <dbReference type="NCBI Taxonomy" id="509173"/>
    <lineage>
        <taxon>Bacteria</taxon>
        <taxon>Pseudomonadati</taxon>
        <taxon>Pseudomonadota</taxon>
        <taxon>Gammaproteobacteria</taxon>
        <taxon>Moraxellales</taxon>
        <taxon>Moraxellaceae</taxon>
        <taxon>Acinetobacter</taxon>
        <taxon>Acinetobacter calcoaceticus/baumannii complex</taxon>
    </lineage>
</organism>
<gene>
    <name evidence="1" type="primary">rplW</name>
    <name type="ordered locus">ABAYE0410</name>
</gene>
<evidence type="ECO:0000255" key="1">
    <source>
        <dbReference type="HAMAP-Rule" id="MF_01369"/>
    </source>
</evidence>
<evidence type="ECO:0000305" key="2"/>
<protein>
    <recommendedName>
        <fullName evidence="1">Large ribosomal subunit protein uL23</fullName>
    </recommendedName>
    <alternativeName>
        <fullName evidence="2">50S ribosomal protein L23</fullName>
    </alternativeName>
</protein>
<keyword id="KW-0687">Ribonucleoprotein</keyword>
<keyword id="KW-0689">Ribosomal protein</keyword>
<keyword id="KW-0694">RNA-binding</keyword>
<keyword id="KW-0699">rRNA-binding</keyword>
<reference key="1">
    <citation type="journal article" date="2008" name="PLoS ONE">
        <title>Comparative analysis of Acinetobacters: three genomes for three lifestyles.</title>
        <authorList>
            <person name="Vallenet D."/>
            <person name="Nordmann P."/>
            <person name="Barbe V."/>
            <person name="Poirel L."/>
            <person name="Mangenot S."/>
            <person name="Bataille E."/>
            <person name="Dossat C."/>
            <person name="Gas S."/>
            <person name="Kreimeyer A."/>
            <person name="Lenoble P."/>
            <person name="Oztas S."/>
            <person name="Poulain J."/>
            <person name="Segurens B."/>
            <person name="Robert C."/>
            <person name="Abergel C."/>
            <person name="Claverie J.-M."/>
            <person name="Raoult D."/>
            <person name="Medigue C."/>
            <person name="Weissenbach J."/>
            <person name="Cruveiller S."/>
        </authorList>
    </citation>
    <scope>NUCLEOTIDE SEQUENCE [LARGE SCALE GENOMIC DNA]</scope>
    <source>
        <strain>AYE</strain>
    </source>
</reference>
<feature type="chain" id="PRO_1000144519" description="Large ribosomal subunit protein uL23">
    <location>
        <begin position="1"/>
        <end position="106"/>
    </location>
</feature>
<sequence>MNNERIYQVLKGPVFSEKAQVLGDTAGVQVFKVDINATKLEIKKAVEKLFGVEVVKVNTTITKGKTKRFGRTLGRRSDVKKAYVTLKAGQDVEMADLGDTAESAAE</sequence>
<accession>B0V6X0</accession>